<dbReference type="EMBL" id="AL939124">
    <property type="protein sequence ID" value="CAB37475.1"/>
    <property type="molecule type" value="Genomic_DNA"/>
</dbReference>
<dbReference type="PIR" id="T35987">
    <property type="entry name" value="T35987"/>
</dbReference>
<dbReference type="RefSeq" id="NP_629835.1">
    <property type="nucleotide sequence ID" value="NC_003888.3"/>
</dbReference>
<dbReference type="RefSeq" id="WP_003973318.1">
    <property type="nucleotide sequence ID" value="NZ_VNID01000024.1"/>
</dbReference>
<dbReference type="SMR" id="Q9Z527"/>
<dbReference type="FunCoup" id="Q9Z527">
    <property type="interactions" value="19"/>
</dbReference>
<dbReference type="STRING" id="100226.gene:17763364"/>
<dbReference type="PaxDb" id="100226-SCO5708"/>
<dbReference type="GeneID" id="91383349"/>
<dbReference type="KEGG" id="sco:SCO5708"/>
<dbReference type="PATRIC" id="fig|100226.15.peg.5797"/>
<dbReference type="eggNOG" id="COG0858">
    <property type="taxonomic scope" value="Bacteria"/>
</dbReference>
<dbReference type="HOGENOM" id="CLU_089475_0_0_11"/>
<dbReference type="InParanoid" id="Q9Z527"/>
<dbReference type="OrthoDB" id="307788at2"/>
<dbReference type="PhylomeDB" id="Q9Z527"/>
<dbReference type="Proteomes" id="UP000001973">
    <property type="component" value="Chromosome"/>
</dbReference>
<dbReference type="GO" id="GO:0005829">
    <property type="term" value="C:cytosol"/>
    <property type="evidence" value="ECO:0000318"/>
    <property type="project" value="GO_Central"/>
</dbReference>
<dbReference type="GO" id="GO:0043024">
    <property type="term" value="F:ribosomal small subunit binding"/>
    <property type="evidence" value="ECO:0000318"/>
    <property type="project" value="GO_Central"/>
</dbReference>
<dbReference type="GO" id="GO:0030490">
    <property type="term" value="P:maturation of SSU-rRNA"/>
    <property type="evidence" value="ECO:0007669"/>
    <property type="project" value="UniProtKB-UniRule"/>
</dbReference>
<dbReference type="GO" id="GO:0042254">
    <property type="term" value="P:ribosome biogenesis"/>
    <property type="evidence" value="ECO:0000318"/>
    <property type="project" value="GO_Central"/>
</dbReference>
<dbReference type="FunFam" id="3.30.300.20:FF:000018">
    <property type="entry name" value="Ribosome-binding factor A"/>
    <property type="match status" value="1"/>
</dbReference>
<dbReference type="Gene3D" id="3.30.300.20">
    <property type="match status" value="1"/>
</dbReference>
<dbReference type="HAMAP" id="MF_00003">
    <property type="entry name" value="RbfA"/>
    <property type="match status" value="1"/>
</dbReference>
<dbReference type="InterPro" id="IPR015946">
    <property type="entry name" value="KH_dom-like_a/b"/>
</dbReference>
<dbReference type="InterPro" id="IPR000238">
    <property type="entry name" value="RbfA"/>
</dbReference>
<dbReference type="InterPro" id="IPR023799">
    <property type="entry name" value="RbfA_dom_sf"/>
</dbReference>
<dbReference type="InterPro" id="IPR020053">
    <property type="entry name" value="Ribosome-bd_factorA_CS"/>
</dbReference>
<dbReference type="NCBIfam" id="TIGR00082">
    <property type="entry name" value="rbfA"/>
    <property type="match status" value="1"/>
</dbReference>
<dbReference type="PANTHER" id="PTHR33515">
    <property type="entry name" value="RIBOSOME-BINDING FACTOR A, CHLOROPLASTIC-RELATED"/>
    <property type="match status" value="1"/>
</dbReference>
<dbReference type="PANTHER" id="PTHR33515:SF1">
    <property type="entry name" value="RIBOSOME-BINDING FACTOR A, CHLOROPLASTIC-RELATED"/>
    <property type="match status" value="1"/>
</dbReference>
<dbReference type="Pfam" id="PF02033">
    <property type="entry name" value="RBFA"/>
    <property type="match status" value="1"/>
</dbReference>
<dbReference type="SUPFAM" id="SSF89919">
    <property type="entry name" value="Ribosome-binding factor A, RbfA"/>
    <property type="match status" value="1"/>
</dbReference>
<dbReference type="PROSITE" id="PS01319">
    <property type="entry name" value="RBFA"/>
    <property type="match status" value="1"/>
</dbReference>
<sequence length="160" mass="17390">MADNARAKRLADLIREVVAQKLQRGIKDPRLGSHVTITDTRVTGDLREATVFYTVYGDDEERKAATAGLESAKGILRSEVGKAAGVKFTPTLTFVMDALPDTARNIEDLLDKARQSDEKVREASAGATYAGEADPYRKPDEDETDTEGAVEADETDDTAK</sequence>
<accession>Q9Z527</accession>
<comment type="function">
    <text evidence="1">One of several proteins that assist in the late maturation steps of the functional core of the 30S ribosomal subunit. Associates with free 30S ribosomal subunits (but not with 30S subunits that are part of 70S ribosomes or polysomes). Required for efficient processing of 16S rRNA. May interact with the 5'-terminal helix region of 16S rRNA.</text>
</comment>
<comment type="subunit">
    <text evidence="1">Monomer. Binds 30S ribosomal subunits, but not 50S ribosomal subunits or 70S ribosomes.</text>
</comment>
<comment type="subcellular location">
    <subcellularLocation>
        <location evidence="1">Cytoplasm</location>
    </subcellularLocation>
</comment>
<comment type="similarity">
    <text evidence="1">Belongs to the RbfA family.</text>
</comment>
<name>RBFA_STRCO</name>
<reference key="1">
    <citation type="journal article" date="2002" name="Nature">
        <title>Complete genome sequence of the model actinomycete Streptomyces coelicolor A3(2).</title>
        <authorList>
            <person name="Bentley S.D."/>
            <person name="Chater K.F."/>
            <person name="Cerdeno-Tarraga A.-M."/>
            <person name="Challis G.L."/>
            <person name="Thomson N.R."/>
            <person name="James K.D."/>
            <person name="Harris D.E."/>
            <person name="Quail M.A."/>
            <person name="Kieser H."/>
            <person name="Harper D."/>
            <person name="Bateman A."/>
            <person name="Brown S."/>
            <person name="Chandra G."/>
            <person name="Chen C.W."/>
            <person name="Collins M."/>
            <person name="Cronin A."/>
            <person name="Fraser A."/>
            <person name="Goble A."/>
            <person name="Hidalgo J."/>
            <person name="Hornsby T."/>
            <person name="Howarth S."/>
            <person name="Huang C.-H."/>
            <person name="Kieser T."/>
            <person name="Larke L."/>
            <person name="Murphy L.D."/>
            <person name="Oliver K."/>
            <person name="O'Neil S."/>
            <person name="Rabbinowitsch E."/>
            <person name="Rajandream M.A."/>
            <person name="Rutherford K.M."/>
            <person name="Rutter S."/>
            <person name="Seeger K."/>
            <person name="Saunders D."/>
            <person name="Sharp S."/>
            <person name="Squares R."/>
            <person name="Squares S."/>
            <person name="Taylor K."/>
            <person name="Warren T."/>
            <person name="Wietzorrek A."/>
            <person name="Woodward J.R."/>
            <person name="Barrell B.G."/>
            <person name="Parkhill J."/>
            <person name="Hopwood D.A."/>
        </authorList>
    </citation>
    <scope>NUCLEOTIDE SEQUENCE [LARGE SCALE GENOMIC DNA]</scope>
    <source>
        <strain>ATCC BAA-471 / A3(2) / M145</strain>
    </source>
</reference>
<evidence type="ECO:0000255" key="1">
    <source>
        <dbReference type="HAMAP-Rule" id="MF_00003"/>
    </source>
</evidence>
<evidence type="ECO:0000256" key="2">
    <source>
        <dbReference type="SAM" id="MobiDB-lite"/>
    </source>
</evidence>
<keyword id="KW-0963">Cytoplasm</keyword>
<keyword id="KW-1185">Reference proteome</keyword>
<keyword id="KW-0690">Ribosome biogenesis</keyword>
<gene>
    <name evidence="1" type="primary">rbfA</name>
    <name type="ordered locus">SCO5708</name>
    <name type="ORF">SC9F2.08c</name>
</gene>
<protein>
    <recommendedName>
        <fullName evidence="1">Ribosome-binding factor A</fullName>
    </recommendedName>
</protein>
<proteinExistence type="inferred from homology"/>
<feature type="chain" id="PRO_0000102743" description="Ribosome-binding factor A">
    <location>
        <begin position="1"/>
        <end position="160"/>
    </location>
</feature>
<feature type="region of interest" description="Disordered" evidence="2">
    <location>
        <begin position="112"/>
        <end position="160"/>
    </location>
</feature>
<feature type="compositionally biased region" description="Basic and acidic residues" evidence="2">
    <location>
        <begin position="112"/>
        <end position="122"/>
    </location>
</feature>
<feature type="compositionally biased region" description="Acidic residues" evidence="2">
    <location>
        <begin position="141"/>
        <end position="160"/>
    </location>
</feature>
<organism>
    <name type="scientific">Streptomyces coelicolor (strain ATCC BAA-471 / A3(2) / M145)</name>
    <dbReference type="NCBI Taxonomy" id="100226"/>
    <lineage>
        <taxon>Bacteria</taxon>
        <taxon>Bacillati</taxon>
        <taxon>Actinomycetota</taxon>
        <taxon>Actinomycetes</taxon>
        <taxon>Kitasatosporales</taxon>
        <taxon>Streptomycetaceae</taxon>
        <taxon>Streptomyces</taxon>
        <taxon>Streptomyces albidoflavus group</taxon>
    </lineage>
</organism>